<keyword id="KW-0002">3D-structure</keyword>
<keyword id="KW-0011">Acute phase</keyword>
<keyword id="KW-0044">Antibiotic</keyword>
<keyword id="KW-0929">Antimicrobial</keyword>
<keyword id="KW-0049">Antioxidant</keyword>
<keyword id="KW-1015">Disulfide bond</keyword>
<keyword id="KW-0325">Glycoprotein</keyword>
<keyword id="KW-0351">Hemoglobin-binding</keyword>
<keyword id="KW-0391">Immunity</keyword>
<keyword id="KW-1185">Reference proteome</keyword>
<keyword id="KW-0964">Secreted</keyword>
<keyword id="KW-0721">Serine protease homolog</keyword>
<keyword id="KW-0732">Signal</keyword>
<keyword id="KW-0768">Sushi</keyword>
<proteinExistence type="evidence at protein level"/>
<sequence>MRALGAVVALLLCGQLFAAETGNEATDATDDSCPKPPEIPKGYVEHMVRYHCQTYYKLRTAGDGVYTLDSNKQWTNKVTGEKLPECEAVCGKPKNPVDQVQRIMGGSLDAKGSFPWQAKMISHHNLTSGATLINEQWLLTTAKNLRLGHKNDTKAKDIAPTLRLYVGKKQEVEIEKVIFHPDNSTVDIGLIKLKQKVPVNERVMPICLPSKDYVNVGLVGYVSGWGRNANLNFTEHLKYVMLPVADQEKCVQYYEGSTVPEKKTPKSPVGVQPILNEHTFCAGLSKYQEDTCYGDAGSAFAVHDKDDDTWYAAGILSFDKSCRTAEYGVYVRVTSILDWIQTTIADN</sequence>
<organism>
    <name type="scientific">Sus scrofa</name>
    <name type="common">Pig</name>
    <dbReference type="NCBI Taxonomy" id="9823"/>
    <lineage>
        <taxon>Eukaryota</taxon>
        <taxon>Metazoa</taxon>
        <taxon>Chordata</taxon>
        <taxon>Craniata</taxon>
        <taxon>Vertebrata</taxon>
        <taxon>Euteleostomi</taxon>
        <taxon>Mammalia</taxon>
        <taxon>Eutheria</taxon>
        <taxon>Laurasiatheria</taxon>
        <taxon>Artiodactyla</taxon>
        <taxon>Suina</taxon>
        <taxon>Suidae</taxon>
        <taxon>Sus</taxon>
    </lineage>
</organism>
<reference key="1">
    <citation type="journal article" date="2002" name="Anim. Genet.">
        <title>Isolation, polymorphism identification and linkage mapping of the porcine haptoglobin locus.</title>
        <authorList>
            <person name="Ponsuksili S."/>
            <person name="Schellander K."/>
            <person name="Wimmers K."/>
        </authorList>
    </citation>
    <scope>NUCLEOTIDE SEQUENCE [MRNA]</scope>
    <source>
        <tissue>Liver</tissue>
    </source>
</reference>
<reference key="2">
    <citation type="journal article" date="2012" name="Nature">
        <title>Structure of the haptoglobin-haemoglobin complex.</title>
        <authorList>
            <person name="Andersen C.B."/>
            <person name="Torvund-Jensen M."/>
            <person name="Nielsen M.J."/>
            <person name="de Oliveira C.L."/>
            <person name="Hersleth H.P."/>
            <person name="Andersen N.H."/>
            <person name="Pedersen J.S."/>
            <person name="Andersen G.R."/>
            <person name="Moestrup S.K."/>
        </authorList>
    </citation>
    <scope>X-RAY CRYSTALLOGRAPHY (2.9 ANGSTROMS) IN COMPLEX WITH HEMOGLOBIN</scope>
    <scope>GLYCOSYLATION AT ASN-125; ASN-151; ASN-183 AND ASN-232</scope>
    <scope>DISULFIDE BONDS</scope>
    <scope>SUBUNIT</scope>
    <scope>INTERACTION WITH CD163</scope>
</reference>
<feature type="signal peptide" evidence="1">
    <location>
        <begin position="1"/>
        <end position="18"/>
    </location>
</feature>
<feature type="chain" id="PRO_0000028474" description="Haptoglobin">
    <location>
        <begin position="19"/>
        <end position="347"/>
    </location>
</feature>
<feature type="chain" id="PRO_0000028475" description="Haptoglobin alpha chain">
    <location>
        <begin position="19"/>
        <end position="101"/>
    </location>
</feature>
<feature type="chain" id="PRO_0000028476" description="Haptoglobin beta chain">
    <location>
        <begin position="103"/>
        <end position="347"/>
    </location>
</feature>
<feature type="domain" description="Sushi" evidence="4">
    <location>
        <begin position="31"/>
        <end position="88"/>
    </location>
</feature>
<feature type="domain" description="Peptidase S1" evidence="3">
    <location>
        <begin position="103"/>
        <end position="345"/>
    </location>
</feature>
<feature type="region of interest" description="Interaction with CD163" evidence="5">
    <location>
        <begin position="259"/>
        <end position="264"/>
    </location>
</feature>
<feature type="glycosylation site" description="N-linked (GlcNAc...) asparagine" evidence="5">
    <location>
        <position position="125"/>
    </location>
</feature>
<feature type="glycosylation site" description="N-linked (GlcNAc...) asparagine" evidence="5">
    <location>
        <position position="151"/>
    </location>
</feature>
<feature type="glycosylation site" description="N-linked (GlcNAc...) asparagine" evidence="5">
    <location>
        <position position="183"/>
    </location>
</feature>
<feature type="glycosylation site" description="N-linked (GlcNAc...) asparagine" evidence="5">
    <location>
        <position position="232"/>
    </location>
</feature>
<feature type="disulfide bond" description="Interchain" evidence="5">
    <location>
        <position position="33"/>
    </location>
</feature>
<feature type="disulfide bond" evidence="5">
    <location>
        <begin position="52"/>
        <end position="86"/>
    </location>
</feature>
<feature type="disulfide bond" description="Interchain (between alpha and beta chains)" evidence="3 4 5">
    <location>
        <begin position="90"/>
        <end position="207"/>
    </location>
</feature>
<feature type="disulfide bond" evidence="5">
    <location>
        <begin position="250"/>
        <end position="281"/>
    </location>
</feature>
<feature type="disulfide bond" evidence="5">
    <location>
        <begin position="292"/>
        <end position="322"/>
    </location>
</feature>
<feature type="strand" evidence="7">
    <location>
        <begin position="42"/>
        <end position="52"/>
    </location>
</feature>
<feature type="strand" evidence="7">
    <location>
        <begin position="56"/>
        <end position="59"/>
    </location>
</feature>
<feature type="strand" evidence="7">
    <location>
        <begin position="64"/>
        <end position="68"/>
    </location>
</feature>
<feature type="strand" evidence="7">
    <location>
        <begin position="74"/>
        <end position="76"/>
    </location>
</feature>
<feature type="turn" evidence="7">
    <location>
        <begin position="77"/>
        <end position="79"/>
    </location>
</feature>
<feature type="strand" evidence="7">
    <location>
        <begin position="85"/>
        <end position="88"/>
    </location>
</feature>
<feature type="strand" evidence="7">
    <location>
        <begin position="118"/>
        <end position="121"/>
    </location>
</feature>
<feature type="strand" evidence="7">
    <location>
        <begin position="127"/>
        <end position="129"/>
    </location>
</feature>
<feature type="strand" evidence="7">
    <location>
        <begin position="134"/>
        <end position="140"/>
    </location>
</feature>
<feature type="helix" evidence="7">
    <location>
        <begin position="142"/>
        <end position="145"/>
    </location>
</feature>
<feature type="turn" evidence="7">
    <location>
        <begin position="146"/>
        <end position="148"/>
    </location>
</feature>
<feature type="helix" evidence="7">
    <location>
        <begin position="155"/>
        <end position="158"/>
    </location>
</feature>
<feature type="helix" evidence="7">
    <location>
        <begin position="159"/>
        <end position="161"/>
    </location>
</feature>
<feature type="strand" evidence="7">
    <location>
        <begin position="163"/>
        <end position="166"/>
    </location>
</feature>
<feature type="turn" evidence="7">
    <location>
        <begin position="167"/>
        <end position="169"/>
    </location>
</feature>
<feature type="strand" evidence="7">
    <location>
        <begin position="170"/>
        <end position="172"/>
    </location>
</feature>
<feature type="strand" evidence="7">
    <location>
        <begin position="174"/>
        <end position="179"/>
    </location>
</feature>
<feature type="turn" evidence="7">
    <location>
        <begin position="183"/>
        <end position="185"/>
    </location>
</feature>
<feature type="strand" evidence="7">
    <location>
        <begin position="189"/>
        <end position="195"/>
    </location>
</feature>
<feature type="strand" evidence="7">
    <location>
        <begin position="200"/>
        <end position="202"/>
    </location>
</feature>
<feature type="strand" evidence="7">
    <location>
        <begin position="219"/>
        <end position="224"/>
    </location>
</feature>
<feature type="strand" evidence="7">
    <location>
        <begin position="231"/>
        <end position="233"/>
    </location>
</feature>
<feature type="strand" evidence="7">
    <location>
        <begin position="238"/>
        <end position="245"/>
    </location>
</feature>
<feature type="helix" evidence="7">
    <location>
        <begin position="247"/>
        <end position="254"/>
    </location>
</feature>
<feature type="helix" evidence="7">
    <location>
        <begin position="260"/>
        <end position="262"/>
    </location>
</feature>
<feature type="strand" evidence="7">
    <location>
        <begin position="268"/>
        <end position="271"/>
    </location>
</feature>
<feature type="strand" evidence="7">
    <location>
        <begin position="279"/>
        <end position="282"/>
    </location>
</feature>
<feature type="strand" evidence="7">
    <location>
        <begin position="299"/>
        <end position="304"/>
    </location>
</feature>
<feature type="turn" evidence="7">
    <location>
        <begin position="305"/>
        <end position="308"/>
    </location>
</feature>
<feature type="strand" evidence="7">
    <location>
        <begin position="309"/>
        <end position="318"/>
    </location>
</feature>
<feature type="turn" evidence="7">
    <location>
        <begin position="322"/>
        <end position="324"/>
    </location>
</feature>
<feature type="strand" evidence="7">
    <location>
        <begin position="328"/>
        <end position="332"/>
    </location>
</feature>
<feature type="helix" evidence="7">
    <location>
        <begin position="333"/>
        <end position="344"/>
    </location>
</feature>
<comment type="function">
    <text evidence="1">As a result of hemolysis, hemoglobin is found to accumulate in the kidney and is secreted in the urine. Haptoglobin captures, and combines with free plasma hemoglobin to allow hepatic recycling of heme iron and to prevent kidney damage. Haptoglobin also acts as an antioxidant, has antibacterial activity and plays a role in modulating many aspects of the acute phase response. Hemoglobin/haptoglobin complexes are rapidly cleared by the macrophage CD163 scavenger receptor expressed on the surface of liver Kupfer cells through an endocytic lysosomal degradation pathway (By similarity).</text>
</comment>
<comment type="subunit">
    <text evidence="2 5">Tetramer of two alpha and two beta chains; disulfide-linked (By similarity). The hemoglobin/haptoglobin complex is composed of a haptoglobin dimer bound to two hemoglobin alpha-beta dimers (PubMed:22922649). Interacts with CD163 (PubMed:22922649). Interacts with ERGIC3 (By similarity).</text>
</comment>
<comment type="subcellular location">
    <subcellularLocation>
        <location evidence="1">Secreted</location>
    </subcellularLocation>
</comment>
<comment type="tissue specificity">
    <text>Expressed by the liver and secreted in plasma.</text>
</comment>
<comment type="domain">
    <text>The beta chain mediates most of the interactions with both subunits of hemoglobin, while the alpha chain forms the homodimeric interface.</text>
</comment>
<comment type="similarity">
    <text evidence="3">Belongs to the peptidase S1 family.</text>
</comment>
<comment type="caution">
    <text evidence="6">Although homologous to serine proteases, it has lost all essential catalytic residues and has no enzymatic activity.</text>
</comment>
<dbReference type="EMBL" id="AF492467">
    <property type="protein sequence ID" value="AAM12554.1"/>
    <property type="molecule type" value="mRNA"/>
</dbReference>
<dbReference type="RefSeq" id="NP_999165.1">
    <property type="nucleotide sequence ID" value="NM_214000.2"/>
</dbReference>
<dbReference type="PDB" id="4F4O">
    <property type="method" value="X-ray"/>
    <property type="resolution" value="2.90 A"/>
    <property type="chains" value="C/F/I/L=1-347"/>
</dbReference>
<dbReference type="PDBsum" id="4F4O"/>
<dbReference type="SMR" id="Q8SPS7"/>
<dbReference type="DIP" id="DIP-59911N"/>
<dbReference type="FunCoup" id="Q8SPS7">
    <property type="interactions" value="287"/>
</dbReference>
<dbReference type="IntAct" id="Q8SPS7">
    <property type="interactions" value="1"/>
</dbReference>
<dbReference type="STRING" id="9823.ENSSSCP00000043076"/>
<dbReference type="MEROPS" id="S01.972"/>
<dbReference type="GlyCosmos" id="Q8SPS7">
    <property type="glycosylation" value="4 sites, No reported glycans"/>
</dbReference>
<dbReference type="GlyGen" id="Q8SPS7">
    <property type="glycosylation" value="4 sites"/>
</dbReference>
<dbReference type="iPTMnet" id="Q8SPS7"/>
<dbReference type="PaxDb" id="9823-ENSSSCP00000002967"/>
<dbReference type="PeptideAtlas" id="Q8SPS7"/>
<dbReference type="Ensembl" id="ENSSSCT00040059197.1">
    <property type="protein sequence ID" value="ENSSSCP00040024815.1"/>
    <property type="gene ID" value="ENSSSCG00040043677.1"/>
</dbReference>
<dbReference type="Ensembl" id="ENSSSCT00045037657.1">
    <property type="protein sequence ID" value="ENSSSCP00045026174.1"/>
    <property type="gene ID" value="ENSSSCG00045021880.1"/>
</dbReference>
<dbReference type="Ensembl" id="ENSSSCT00065044215.1">
    <property type="protein sequence ID" value="ENSSSCP00065018851.1"/>
    <property type="gene ID" value="ENSSSCG00065032557.1"/>
</dbReference>
<dbReference type="Ensembl" id="ENSSSCT00070003326.1">
    <property type="protein sequence ID" value="ENSSSCP00070002755.1"/>
    <property type="gene ID" value="ENSSSCG00070001777.1"/>
</dbReference>
<dbReference type="Ensembl" id="ENSSSCT00115022899">
    <property type="protein sequence ID" value="ENSSSCP00115021708"/>
    <property type="gene ID" value="ENSSSCG00115013205"/>
</dbReference>
<dbReference type="GeneID" id="397061"/>
<dbReference type="KEGG" id="ssc:397061"/>
<dbReference type="CTD" id="3240"/>
<dbReference type="eggNOG" id="KOG3627">
    <property type="taxonomic scope" value="Eukaryota"/>
</dbReference>
<dbReference type="InParanoid" id="Q8SPS7"/>
<dbReference type="OrthoDB" id="6339452at2759"/>
<dbReference type="TreeFam" id="TF334326"/>
<dbReference type="Reactome" id="R-SSC-2168880">
    <property type="pathway name" value="Scavenging of heme from plasma"/>
</dbReference>
<dbReference type="Reactome" id="R-SSC-6798695">
    <property type="pathway name" value="Neutrophil degranulation"/>
</dbReference>
<dbReference type="EvolutionaryTrace" id="Q8SPS7"/>
<dbReference type="Proteomes" id="UP000008227">
    <property type="component" value="Unplaced"/>
</dbReference>
<dbReference type="Proteomes" id="UP000314985">
    <property type="component" value="Chromosome 6"/>
</dbReference>
<dbReference type="Proteomes" id="UP000694570">
    <property type="component" value="Unplaced"/>
</dbReference>
<dbReference type="Proteomes" id="UP000694571">
    <property type="component" value="Unplaced"/>
</dbReference>
<dbReference type="Proteomes" id="UP000694720">
    <property type="component" value="Unplaced"/>
</dbReference>
<dbReference type="Proteomes" id="UP000694722">
    <property type="component" value="Unplaced"/>
</dbReference>
<dbReference type="Proteomes" id="UP000694723">
    <property type="component" value="Unplaced"/>
</dbReference>
<dbReference type="Proteomes" id="UP000694724">
    <property type="component" value="Unplaced"/>
</dbReference>
<dbReference type="Proteomes" id="UP000694725">
    <property type="component" value="Unplaced"/>
</dbReference>
<dbReference type="Proteomes" id="UP000694726">
    <property type="component" value="Unplaced"/>
</dbReference>
<dbReference type="Proteomes" id="UP000694727">
    <property type="component" value="Unplaced"/>
</dbReference>
<dbReference type="Proteomes" id="UP000694728">
    <property type="component" value="Unplaced"/>
</dbReference>
<dbReference type="GO" id="GO:0072562">
    <property type="term" value="C:blood microparticle"/>
    <property type="evidence" value="ECO:0000318"/>
    <property type="project" value="GO_Central"/>
</dbReference>
<dbReference type="GO" id="GO:0005615">
    <property type="term" value="C:extracellular space"/>
    <property type="evidence" value="ECO:0000318"/>
    <property type="project" value="GO_Central"/>
</dbReference>
<dbReference type="GO" id="GO:0016209">
    <property type="term" value="F:antioxidant activity"/>
    <property type="evidence" value="ECO:0007669"/>
    <property type="project" value="UniProtKB-KW"/>
</dbReference>
<dbReference type="GO" id="GO:0030492">
    <property type="term" value="F:hemoglobin binding"/>
    <property type="evidence" value="ECO:0007669"/>
    <property type="project" value="UniProtKB-KW"/>
</dbReference>
<dbReference type="GO" id="GO:0004252">
    <property type="term" value="F:serine-type endopeptidase activity"/>
    <property type="evidence" value="ECO:0000318"/>
    <property type="project" value="GO_Central"/>
</dbReference>
<dbReference type="GO" id="GO:0006953">
    <property type="term" value="P:acute-phase response"/>
    <property type="evidence" value="ECO:0007669"/>
    <property type="project" value="UniProtKB-KW"/>
</dbReference>
<dbReference type="GO" id="GO:0042742">
    <property type="term" value="P:defense response to bacterium"/>
    <property type="evidence" value="ECO:0007669"/>
    <property type="project" value="UniProtKB-KW"/>
</dbReference>
<dbReference type="GO" id="GO:0002376">
    <property type="term" value="P:immune system process"/>
    <property type="evidence" value="ECO:0007669"/>
    <property type="project" value="UniProtKB-KW"/>
</dbReference>
<dbReference type="GO" id="GO:0031638">
    <property type="term" value="P:zymogen activation"/>
    <property type="evidence" value="ECO:0000318"/>
    <property type="project" value="GO_Central"/>
</dbReference>
<dbReference type="CDD" id="cd00033">
    <property type="entry name" value="CCP"/>
    <property type="match status" value="1"/>
</dbReference>
<dbReference type="CDD" id="cd00190">
    <property type="entry name" value="Tryp_SPc"/>
    <property type="match status" value="1"/>
</dbReference>
<dbReference type="FunFam" id="2.10.70.10:FF:000048">
    <property type="entry name" value="Haptoglobin"/>
    <property type="match status" value="1"/>
</dbReference>
<dbReference type="FunFam" id="2.40.10.10:FF:000027">
    <property type="entry name" value="Haptoglobin"/>
    <property type="match status" value="1"/>
</dbReference>
<dbReference type="FunFam" id="2.40.10.10:FF:000031">
    <property type="entry name" value="Haptoglobin"/>
    <property type="match status" value="1"/>
</dbReference>
<dbReference type="Gene3D" id="2.10.70.10">
    <property type="entry name" value="Complement Module, domain 1"/>
    <property type="match status" value="1"/>
</dbReference>
<dbReference type="Gene3D" id="2.40.10.10">
    <property type="entry name" value="Trypsin-like serine proteases"/>
    <property type="match status" value="2"/>
</dbReference>
<dbReference type="InterPro" id="IPR008292">
    <property type="entry name" value="Haptoglobin"/>
</dbReference>
<dbReference type="InterPro" id="IPR009003">
    <property type="entry name" value="Peptidase_S1_PA"/>
</dbReference>
<dbReference type="InterPro" id="IPR043504">
    <property type="entry name" value="Peptidase_S1_PA_chymotrypsin"/>
</dbReference>
<dbReference type="InterPro" id="IPR001314">
    <property type="entry name" value="Peptidase_S1A"/>
</dbReference>
<dbReference type="InterPro" id="IPR035976">
    <property type="entry name" value="Sushi/SCR/CCP_sf"/>
</dbReference>
<dbReference type="InterPro" id="IPR000436">
    <property type="entry name" value="Sushi_SCR_CCP_dom"/>
</dbReference>
<dbReference type="InterPro" id="IPR001254">
    <property type="entry name" value="Trypsin_dom"/>
</dbReference>
<dbReference type="PANTHER" id="PTHR24255">
    <property type="entry name" value="COMPLEMENT COMPONENT 1, S SUBCOMPONENT-RELATED"/>
    <property type="match status" value="1"/>
</dbReference>
<dbReference type="PANTHER" id="PTHR24255:SF27">
    <property type="entry name" value="HAPTOGLOBIN-RELATED PROTEIN"/>
    <property type="match status" value="1"/>
</dbReference>
<dbReference type="Pfam" id="PF00089">
    <property type="entry name" value="Trypsin"/>
    <property type="match status" value="1"/>
</dbReference>
<dbReference type="PIRSF" id="PIRSF001137">
    <property type="entry name" value="Haptoglobin"/>
    <property type="match status" value="1"/>
</dbReference>
<dbReference type="PRINTS" id="PR00722">
    <property type="entry name" value="CHYMOTRYPSIN"/>
</dbReference>
<dbReference type="SMART" id="SM00020">
    <property type="entry name" value="Tryp_SPc"/>
    <property type="match status" value="1"/>
</dbReference>
<dbReference type="SUPFAM" id="SSF57535">
    <property type="entry name" value="Complement control module/SCR domain"/>
    <property type="match status" value="1"/>
</dbReference>
<dbReference type="SUPFAM" id="SSF50494">
    <property type="entry name" value="Trypsin-like serine proteases"/>
    <property type="match status" value="1"/>
</dbReference>
<dbReference type="PROSITE" id="PS50923">
    <property type="entry name" value="SUSHI"/>
    <property type="match status" value="1"/>
</dbReference>
<dbReference type="PROSITE" id="PS50240">
    <property type="entry name" value="TRYPSIN_DOM"/>
    <property type="match status" value="1"/>
</dbReference>
<evidence type="ECO:0000250" key="1"/>
<evidence type="ECO:0000250" key="2">
    <source>
        <dbReference type="UniProtKB" id="P00738"/>
    </source>
</evidence>
<evidence type="ECO:0000255" key="3">
    <source>
        <dbReference type="PROSITE-ProRule" id="PRU00274"/>
    </source>
</evidence>
<evidence type="ECO:0000255" key="4">
    <source>
        <dbReference type="PROSITE-ProRule" id="PRU00302"/>
    </source>
</evidence>
<evidence type="ECO:0000269" key="5">
    <source>
    </source>
</evidence>
<evidence type="ECO:0000305" key="6"/>
<evidence type="ECO:0007829" key="7">
    <source>
        <dbReference type="PDB" id="4F4O"/>
    </source>
</evidence>
<name>HPT_PIG</name>
<protein>
    <recommendedName>
        <fullName>Haptoglobin</fullName>
    </recommendedName>
    <component>
        <recommendedName>
            <fullName>Haptoglobin alpha chain</fullName>
        </recommendedName>
    </component>
    <component>
        <recommendedName>
            <fullName>Haptoglobin beta chain</fullName>
        </recommendedName>
    </component>
</protein>
<gene>
    <name type="primary">HP</name>
</gene>
<accession>Q8SPS7</accession>